<organism>
    <name type="scientific">Staphylococcus aureus (strain COL)</name>
    <dbReference type="NCBI Taxonomy" id="93062"/>
    <lineage>
        <taxon>Bacteria</taxon>
        <taxon>Bacillati</taxon>
        <taxon>Bacillota</taxon>
        <taxon>Bacilli</taxon>
        <taxon>Bacillales</taxon>
        <taxon>Staphylococcaceae</taxon>
        <taxon>Staphylococcus</taxon>
    </lineage>
</organism>
<protein>
    <recommendedName>
        <fullName evidence="1">Small ribosomal subunit protein uS5</fullName>
    </recommendedName>
    <alternativeName>
        <fullName evidence="2">30S ribosomal protein S5</fullName>
    </alternativeName>
</protein>
<evidence type="ECO:0000255" key="1">
    <source>
        <dbReference type="HAMAP-Rule" id="MF_01307"/>
    </source>
</evidence>
<evidence type="ECO:0000305" key="2"/>
<dbReference type="EMBL" id="CP000046">
    <property type="protein sequence ID" value="AAW37097.1"/>
    <property type="molecule type" value="Genomic_DNA"/>
</dbReference>
<dbReference type="RefSeq" id="WP_000113851.1">
    <property type="nucleotide sequence ID" value="NZ_JBGOFO010000004.1"/>
</dbReference>
<dbReference type="SMR" id="Q5HDX5"/>
<dbReference type="KEGG" id="sac:SACOL2222"/>
<dbReference type="HOGENOM" id="CLU_065898_2_2_9"/>
<dbReference type="Proteomes" id="UP000000530">
    <property type="component" value="Chromosome"/>
</dbReference>
<dbReference type="GO" id="GO:0015935">
    <property type="term" value="C:small ribosomal subunit"/>
    <property type="evidence" value="ECO:0007669"/>
    <property type="project" value="InterPro"/>
</dbReference>
<dbReference type="GO" id="GO:0019843">
    <property type="term" value="F:rRNA binding"/>
    <property type="evidence" value="ECO:0007669"/>
    <property type="project" value="UniProtKB-UniRule"/>
</dbReference>
<dbReference type="GO" id="GO:0003735">
    <property type="term" value="F:structural constituent of ribosome"/>
    <property type="evidence" value="ECO:0007669"/>
    <property type="project" value="InterPro"/>
</dbReference>
<dbReference type="GO" id="GO:0006412">
    <property type="term" value="P:translation"/>
    <property type="evidence" value="ECO:0007669"/>
    <property type="project" value="UniProtKB-UniRule"/>
</dbReference>
<dbReference type="FunFam" id="3.30.160.20:FF:000001">
    <property type="entry name" value="30S ribosomal protein S5"/>
    <property type="match status" value="1"/>
</dbReference>
<dbReference type="FunFam" id="3.30.230.10:FF:000002">
    <property type="entry name" value="30S ribosomal protein S5"/>
    <property type="match status" value="1"/>
</dbReference>
<dbReference type="Gene3D" id="3.30.160.20">
    <property type="match status" value="1"/>
</dbReference>
<dbReference type="Gene3D" id="3.30.230.10">
    <property type="match status" value="1"/>
</dbReference>
<dbReference type="HAMAP" id="MF_01307_B">
    <property type="entry name" value="Ribosomal_uS5_B"/>
    <property type="match status" value="1"/>
</dbReference>
<dbReference type="InterPro" id="IPR020568">
    <property type="entry name" value="Ribosomal_Su5_D2-typ_SF"/>
</dbReference>
<dbReference type="InterPro" id="IPR000851">
    <property type="entry name" value="Ribosomal_uS5"/>
</dbReference>
<dbReference type="InterPro" id="IPR005712">
    <property type="entry name" value="Ribosomal_uS5_bac-type"/>
</dbReference>
<dbReference type="InterPro" id="IPR005324">
    <property type="entry name" value="Ribosomal_uS5_C"/>
</dbReference>
<dbReference type="InterPro" id="IPR013810">
    <property type="entry name" value="Ribosomal_uS5_N"/>
</dbReference>
<dbReference type="InterPro" id="IPR018192">
    <property type="entry name" value="Ribosomal_uS5_N_CS"/>
</dbReference>
<dbReference type="InterPro" id="IPR014721">
    <property type="entry name" value="Ribsml_uS5_D2-typ_fold_subgr"/>
</dbReference>
<dbReference type="NCBIfam" id="TIGR01021">
    <property type="entry name" value="rpsE_bact"/>
    <property type="match status" value="1"/>
</dbReference>
<dbReference type="PANTHER" id="PTHR48277">
    <property type="entry name" value="MITOCHONDRIAL RIBOSOMAL PROTEIN S5"/>
    <property type="match status" value="1"/>
</dbReference>
<dbReference type="PANTHER" id="PTHR48277:SF1">
    <property type="entry name" value="MITOCHONDRIAL RIBOSOMAL PROTEIN S5"/>
    <property type="match status" value="1"/>
</dbReference>
<dbReference type="Pfam" id="PF00333">
    <property type="entry name" value="Ribosomal_S5"/>
    <property type="match status" value="1"/>
</dbReference>
<dbReference type="Pfam" id="PF03719">
    <property type="entry name" value="Ribosomal_S5_C"/>
    <property type="match status" value="1"/>
</dbReference>
<dbReference type="SUPFAM" id="SSF54768">
    <property type="entry name" value="dsRNA-binding domain-like"/>
    <property type="match status" value="1"/>
</dbReference>
<dbReference type="SUPFAM" id="SSF54211">
    <property type="entry name" value="Ribosomal protein S5 domain 2-like"/>
    <property type="match status" value="1"/>
</dbReference>
<dbReference type="PROSITE" id="PS00585">
    <property type="entry name" value="RIBOSOMAL_S5"/>
    <property type="match status" value="1"/>
</dbReference>
<dbReference type="PROSITE" id="PS50881">
    <property type="entry name" value="S5_DSRBD"/>
    <property type="match status" value="1"/>
</dbReference>
<sequence>MARREEETKEFEERVVTINRVAKVVKGGRRFRFTALVVVGDKNGRVGFGTGKAQEVPEAIKKAVEAAKKDLVVVPRVEGTTPHTITGRYGSGSVFMKPAAPGTGVIAGGPVRAVLELAGITDILSKSLGSNTPINMVRATIDGLQNLKNAEDVAKLRGKTVEELYN</sequence>
<keyword id="KW-0687">Ribonucleoprotein</keyword>
<keyword id="KW-0689">Ribosomal protein</keyword>
<keyword id="KW-0694">RNA-binding</keyword>
<keyword id="KW-0699">rRNA-binding</keyword>
<reference key="1">
    <citation type="journal article" date="2005" name="J. Bacteriol.">
        <title>Insights on evolution of virulence and resistance from the complete genome analysis of an early methicillin-resistant Staphylococcus aureus strain and a biofilm-producing methicillin-resistant Staphylococcus epidermidis strain.</title>
        <authorList>
            <person name="Gill S.R."/>
            <person name="Fouts D.E."/>
            <person name="Archer G.L."/>
            <person name="Mongodin E.F."/>
            <person name="DeBoy R.T."/>
            <person name="Ravel J."/>
            <person name="Paulsen I.T."/>
            <person name="Kolonay J.F."/>
            <person name="Brinkac L.M."/>
            <person name="Beanan M.J."/>
            <person name="Dodson R.J."/>
            <person name="Daugherty S.C."/>
            <person name="Madupu R."/>
            <person name="Angiuoli S.V."/>
            <person name="Durkin A.S."/>
            <person name="Haft D.H."/>
            <person name="Vamathevan J.J."/>
            <person name="Khouri H."/>
            <person name="Utterback T.R."/>
            <person name="Lee C."/>
            <person name="Dimitrov G."/>
            <person name="Jiang L."/>
            <person name="Qin H."/>
            <person name="Weidman J."/>
            <person name="Tran K."/>
            <person name="Kang K.H."/>
            <person name="Hance I.R."/>
            <person name="Nelson K.E."/>
            <person name="Fraser C.M."/>
        </authorList>
    </citation>
    <scope>NUCLEOTIDE SEQUENCE [LARGE SCALE GENOMIC DNA]</scope>
    <source>
        <strain>COL</strain>
    </source>
</reference>
<feature type="chain" id="PRO_0000131593" description="Small ribosomal subunit protein uS5">
    <location>
        <begin position="1"/>
        <end position="166"/>
    </location>
</feature>
<feature type="domain" description="S5 DRBM" evidence="1">
    <location>
        <begin position="11"/>
        <end position="74"/>
    </location>
</feature>
<proteinExistence type="inferred from homology"/>
<name>RS5_STAAC</name>
<accession>Q5HDX5</accession>
<comment type="function">
    <text evidence="1">With S4 and S12 plays an important role in translational accuracy.</text>
</comment>
<comment type="function">
    <text evidence="1">Located at the back of the 30S subunit body where it stabilizes the conformation of the head with respect to the body.</text>
</comment>
<comment type="subunit">
    <text evidence="1">Part of the 30S ribosomal subunit. Contacts proteins S4 and S8.</text>
</comment>
<comment type="domain">
    <text>The N-terminal domain interacts with the head of the 30S subunit; the C-terminal domain interacts with the body and contacts protein S4. The interaction surface between S4 and S5 is involved in control of translational fidelity.</text>
</comment>
<comment type="similarity">
    <text evidence="1">Belongs to the universal ribosomal protein uS5 family.</text>
</comment>
<gene>
    <name evidence="1" type="primary">rpsE</name>
    <name type="ordered locus">SACOL2222</name>
</gene>